<organism>
    <name type="scientific">Burkholderia vietnamiensis (strain G4 / LMG 22486)</name>
    <name type="common">Burkholderia cepacia (strain R1808)</name>
    <dbReference type="NCBI Taxonomy" id="269482"/>
    <lineage>
        <taxon>Bacteria</taxon>
        <taxon>Pseudomonadati</taxon>
        <taxon>Pseudomonadota</taxon>
        <taxon>Betaproteobacteria</taxon>
        <taxon>Burkholderiales</taxon>
        <taxon>Burkholderiaceae</taxon>
        <taxon>Burkholderia</taxon>
        <taxon>Burkholderia cepacia complex</taxon>
    </lineage>
</organism>
<proteinExistence type="inferred from homology"/>
<dbReference type="EC" id="3.4.25.2" evidence="1"/>
<dbReference type="EMBL" id="CP000614">
    <property type="protein sequence ID" value="ABO56165.1"/>
    <property type="molecule type" value="Genomic_DNA"/>
</dbReference>
<dbReference type="SMR" id="A4JIR2"/>
<dbReference type="MEROPS" id="T01.006"/>
<dbReference type="KEGG" id="bvi:Bcep1808_3174"/>
<dbReference type="eggNOG" id="COG5405">
    <property type="taxonomic scope" value="Bacteria"/>
</dbReference>
<dbReference type="HOGENOM" id="CLU_093872_1_0_4"/>
<dbReference type="Proteomes" id="UP000002287">
    <property type="component" value="Chromosome 1"/>
</dbReference>
<dbReference type="GO" id="GO:0009376">
    <property type="term" value="C:HslUV protease complex"/>
    <property type="evidence" value="ECO:0007669"/>
    <property type="project" value="UniProtKB-UniRule"/>
</dbReference>
<dbReference type="GO" id="GO:0005839">
    <property type="term" value="C:proteasome core complex"/>
    <property type="evidence" value="ECO:0007669"/>
    <property type="project" value="InterPro"/>
</dbReference>
<dbReference type="GO" id="GO:0046872">
    <property type="term" value="F:metal ion binding"/>
    <property type="evidence" value="ECO:0007669"/>
    <property type="project" value="UniProtKB-KW"/>
</dbReference>
<dbReference type="GO" id="GO:0004298">
    <property type="term" value="F:threonine-type endopeptidase activity"/>
    <property type="evidence" value="ECO:0007669"/>
    <property type="project" value="UniProtKB-KW"/>
</dbReference>
<dbReference type="GO" id="GO:0051603">
    <property type="term" value="P:proteolysis involved in protein catabolic process"/>
    <property type="evidence" value="ECO:0007669"/>
    <property type="project" value="InterPro"/>
</dbReference>
<dbReference type="CDD" id="cd01913">
    <property type="entry name" value="protease_HslV"/>
    <property type="match status" value="1"/>
</dbReference>
<dbReference type="FunFam" id="3.60.20.10:FF:000002">
    <property type="entry name" value="ATP-dependent protease subunit HslV"/>
    <property type="match status" value="1"/>
</dbReference>
<dbReference type="Gene3D" id="3.60.20.10">
    <property type="entry name" value="Glutamine Phosphoribosylpyrophosphate, subunit 1, domain 1"/>
    <property type="match status" value="1"/>
</dbReference>
<dbReference type="HAMAP" id="MF_00248">
    <property type="entry name" value="HslV"/>
    <property type="match status" value="1"/>
</dbReference>
<dbReference type="InterPro" id="IPR022281">
    <property type="entry name" value="ATP-dep_Prtase_HsIV_su"/>
</dbReference>
<dbReference type="InterPro" id="IPR029055">
    <property type="entry name" value="Ntn_hydrolases_N"/>
</dbReference>
<dbReference type="InterPro" id="IPR001353">
    <property type="entry name" value="Proteasome_sua/b"/>
</dbReference>
<dbReference type="InterPro" id="IPR023333">
    <property type="entry name" value="Proteasome_suB-type"/>
</dbReference>
<dbReference type="NCBIfam" id="TIGR03692">
    <property type="entry name" value="ATP_dep_HslV"/>
    <property type="match status" value="1"/>
</dbReference>
<dbReference type="NCBIfam" id="NF003964">
    <property type="entry name" value="PRK05456.1"/>
    <property type="match status" value="1"/>
</dbReference>
<dbReference type="PANTHER" id="PTHR32194:SF0">
    <property type="entry name" value="ATP-DEPENDENT PROTEASE SUBUNIT HSLV"/>
    <property type="match status" value="1"/>
</dbReference>
<dbReference type="PANTHER" id="PTHR32194">
    <property type="entry name" value="METALLOPROTEASE TLDD"/>
    <property type="match status" value="1"/>
</dbReference>
<dbReference type="Pfam" id="PF00227">
    <property type="entry name" value="Proteasome"/>
    <property type="match status" value="1"/>
</dbReference>
<dbReference type="PIRSF" id="PIRSF039093">
    <property type="entry name" value="HslV"/>
    <property type="match status" value="1"/>
</dbReference>
<dbReference type="SUPFAM" id="SSF56235">
    <property type="entry name" value="N-terminal nucleophile aminohydrolases (Ntn hydrolases)"/>
    <property type="match status" value="1"/>
</dbReference>
<dbReference type="PROSITE" id="PS51476">
    <property type="entry name" value="PROTEASOME_BETA_2"/>
    <property type="match status" value="1"/>
</dbReference>
<comment type="function">
    <text evidence="1">Protease subunit of a proteasome-like degradation complex believed to be a general protein degrading machinery.</text>
</comment>
<comment type="catalytic activity">
    <reaction evidence="1">
        <text>ATP-dependent cleavage of peptide bonds with broad specificity.</text>
        <dbReference type="EC" id="3.4.25.2"/>
    </reaction>
</comment>
<comment type="activity regulation">
    <text evidence="1">Allosterically activated by HslU binding.</text>
</comment>
<comment type="subunit">
    <text evidence="1">A double ring-shaped homohexamer of HslV is capped on each side by a ring-shaped HslU homohexamer. The assembly of the HslU/HslV complex is dependent on binding of ATP.</text>
</comment>
<comment type="subcellular location">
    <subcellularLocation>
        <location evidence="1">Cytoplasm</location>
    </subcellularLocation>
</comment>
<comment type="similarity">
    <text evidence="1">Belongs to the peptidase T1B family. HslV subfamily.</text>
</comment>
<accession>A4JIR2</accession>
<name>HSLV_BURVG</name>
<reference key="1">
    <citation type="submission" date="2007-03" db="EMBL/GenBank/DDBJ databases">
        <title>Complete sequence of chromosome 1 of Burkholderia vietnamiensis G4.</title>
        <authorList>
            <consortium name="US DOE Joint Genome Institute"/>
            <person name="Copeland A."/>
            <person name="Lucas S."/>
            <person name="Lapidus A."/>
            <person name="Barry K."/>
            <person name="Detter J.C."/>
            <person name="Glavina del Rio T."/>
            <person name="Hammon N."/>
            <person name="Israni S."/>
            <person name="Dalin E."/>
            <person name="Tice H."/>
            <person name="Pitluck S."/>
            <person name="Chain P."/>
            <person name="Malfatti S."/>
            <person name="Shin M."/>
            <person name="Vergez L."/>
            <person name="Schmutz J."/>
            <person name="Larimer F."/>
            <person name="Land M."/>
            <person name="Hauser L."/>
            <person name="Kyrpides N."/>
            <person name="Tiedje J."/>
            <person name="Richardson P."/>
        </authorList>
    </citation>
    <scope>NUCLEOTIDE SEQUENCE [LARGE SCALE GENOMIC DNA]</scope>
    <source>
        <strain>G4 / LMG 22486</strain>
    </source>
</reference>
<feature type="chain" id="PRO_1000012593" description="ATP-dependent protease subunit HslV">
    <location>
        <begin position="1"/>
        <end position="178"/>
    </location>
</feature>
<feature type="active site" evidence="1">
    <location>
        <position position="7"/>
    </location>
</feature>
<feature type="binding site" evidence="1">
    <location>
        <position position="162"/>
    </location>
    <ligand>
        <name>Na(+)</name>
        <dbReference type="ChEBI" id="CHEBI:29101"/>
    </ligand>
</feature>
<feature type="binding site" evidence="1">
    <location>
        <position position="165"/>
    </location>
    <ligand>
        <name>Na(+)</name>
        <dbReference type="ChEBI" id="CHEBI:29101"/>
    </ligand>
</feature>
<feature type="binding site" evidence="1">
    <location>
        <position position="168"/>
    </location>
    <ligand>
        <name>Na(+)</name>
        <dbReference type="ChEBI" id="CHEBI:29101"/>
    </ligand>
</feature>
<evidence type="ECO:0000255" key="1">
    <source>
        <dbReference type="HAMAP-Rule" id="MF_00248"/>
    </source>
</evidence>
<sequence length="178" mass="19177">MEQFHGTTIVSVRRGDKVALGGDGQVTLGNIVMKGGARKVRRIYNNQVLVGFAGGTADAFSLLDRFEAKLEKHQGNLTRAAVELAKDWRTDRMLRRLEAMLITADATTTLVITGNGDVLDPEGGICAIGSGGAYAQAAARALAENTDMSPREIVEKSLEIAGDMCIYTNHNRIIETIE</sequence>
<protein>
    <recommendedName>
        <fullName evidence="1">ATP-dependent protease subunit HslV</fullName>
        <ecNumber evidence="1">3.4.25.2</ecNumber>
    </recommendedName>
</protein>
<keyword id="KW-0021">Allosteric enzyme</keyword>
<keyword id="KW-0963">Cytoplasm</keyword>
<keyword id="KW-0378">Hydrolase</keyword>
<keyword id="KW-0479">Metal-binding</keyword>
<keyword id="KW-0645">Protease</keyword>
<keyword id="KW-0915">Sodium</keyword>
<keyword id="KW-0888">Threonine protease</keyword>
<gene>
    <name evidence="1" type="primary">hslV</name>
    <name type="ordered locus">Bcep1808_3174</name>
</gene>